<keyword id="KW-0687">Ribonucleoprotein</keyword>
<keyword id="KW-0689">Ribosomal protein</keyword>
<keyword id="KW-0694">RNA-binding</keyword>
<keyword id="KW-0699">rRNA-binding</keyword>
<feature type="chain" id="PRO_1000142740" description="Large ribosomal subunit protein uL18">
    <location>
        <begin position="1"/>
        <end position="119"/>
    </location>
</feature>
<comment type="function">
    <text evidence="1">This is one of the proteins that bind and probably mediate the attachment of the 5S RNA into the large ribosomal subunit, where it forms part of the central protuberance.</text>
</comment>
<comment type="subunit">
    <text evidence="1">Part of the 50S ribosomal subunit; part of the 5S rRNA/L5/L18/L25 subcomplex. Contacts the 5S and 23S rRNAs.</text>
</comment>
<comment type="similarity">
    <text evidence="1">Belongs to the universal ribosomal protein uL18 family.</text>
</comment>
<name>RL18_XANOP</name>
<protein>
    <recommendedName>
        <fullName evidence="1">Large ribosomal subunit protein uL18</fullName>
    </recommendedName>
    <alternativeName>
        <fullName evidence="2">50S ribosomal protein L18</fullName>
    </alternativeName>
</protein>
<evidence type="ECO:0000255" key="1">
    <source>
        <dbReference type="HAMAP-Rule" id="MF_01337"/>
    </source>
</evidence>
<evidence type="ECO:0000305" key="2"/>
<proteinExistence type="inferred from homology"/>
<gene>
    <name evidence="1" type="primary">rplR</name>
    <name type="ordered locus">PXO_04504</name>
</gene>
<sequence length="119" mass="12832">MSINKNIARLRRAKSTRSHIRDLGVARLSVLRTGQHLYAQVFTADGSKVIAAANTLQADVKDGLKNGKNSDAAVKVGKLIAERAKAAGIEKVAFDRSGYRYHGRIKALADAAREGGLQF</sequence>
<accession>B2SQS6</accession>
<reference key="1">
    <citation type="journal article" date="2008" name="BMC Genomics">
        <title>Genome sequence and rapid evolution of the rice pathogen Xanthomonas oryzae pv. oryzae PXO99A.</title>
        <authorList>
            <person name="Salzberg S.L."/>
            <person name="Sommer D.D."/>
            <person name="Schatz M.C."/>
            <person name="Phillippy A.M."/>
            <person name="Rabinowicz P.D."/>
            <person name="Tsuge S."/>
            <person name="Furutani A."/>
            <person name="Ochiai H."/>
            <person name="Delcher A.L."/>
            <person name="Kelley D."/>
            <person name="Madupu R."/>
            <person name="Puiu D."/>
            <person name="Radune D."/>
            <person name="Shumway M."/>
            <person name="Trapnell C."/>
            <person name="Aparna G."/>
            <person name="Jha G."/>
            <person name="Pandey A."/>
            <person name="Patil P.B."/>
            <person name="Ishihara H."/>
            <person name="Meyer D.F."/>
            <person name="Szurek B."/>
            <person name="Verdier V."/>
            <person name="Koebnik R."/>
            <person name="Dow J.M."/>
            <person name="Ryan R.P."/>
            <person name="Hirata H."/>
            <person name="Tsuyumu S."/>
            <person name="Won Lee S."/>
            <person name="Seo Y.-S."/>
            <person name="Sriariyanum M."/>
            <person name="Ronald P.C."/>
            <person name="Sonti R.V."/>
            <person name="Van Sluys M.-A."/>
            <person name="Leach J.E."/>
            <person name="White F.F."/>
            <person name="Bogdanove A.J."/>
        </authorList>
    </citation>
    <scope>NUCLEOTIDE SEQUENCE [LARGE SCALE GENOMIC DNA]</scope>
    <source>
        <strain>PXO99A</strain>
    </source>
</reference>
<dbReference type="EMBL" id="CP000967">
    <property type="protein sequence ID" value="ACD57903.1"/>
    <property type="molecule type" value="Genomic_DNA"/>
</dbReference>
<dbReference type="RefSeq" id="WP_012444300.1">
    <property type="nucleotide sequence ID" value="NC_010717.2"/>
</dbReference>
<dbReference type="SMR" id="B2SQS6"/>
<dbReference type="KEGG" id="xop:PXO_04504"/>
<dbReference type="eggNOG" id="COG0256">
    <property type="taxonomic scope" value="Bacteria"/>
</dbReference>
<dbReference type="HOGENOM" id="CLU_098841_0_1_6"/>
<dbReference type="Proteomes" id="UP000001740">
    <property type="component" value="Chromosome"/>
</dbReference>
<dbReference type="GO" id="GO:0022625">
    <property type="term" value="C:cytosolic large ribosomal subunit"/>
    <property type="evidence" value="ECO:0007669"/>
    <property type="project" value="TreeGrafter"/>
</dbReference>
<dbReference type="GO" id="GO:0008097">
    <property type="term" value="F:5S rRNA binding"/>
    <property type="evidence" value="ECO:0007669"/>
    <property type="project" value="TreeGrafter"/>
</dbReference>
<dbReference type="GO" id="GO:0003735">
    <property type="term" value="F:structural constituent of ribosome"/>
    <property type="evidence" value="ECO:0007669"/>
    <property type="project" value="InterPro"/>
</dbReference>
<dbReference type="GO" id="GO:0006412">
    <property type="term" value="P:translation"/>
    <property type="evidence" value="ECO:0007669"/>
    <property type="project" value="UniProtKB-UniRule"/>
</dbReference>
<dbReference type="CDD" id="cd00432">
    <property type="entry name" value="Ribosomal_L18_L5e"/>
    <property type="match status" value="1"/>
</dbReference>
<dbReference type="FunFam" id="3.30.420.100:FF:000001">
    <property type="entry name" value="50S ribosomal protein L18"/>
    <property type="match status" value="1"/>
</dbReference>
<dbReference type="Gene3D" id="3.30.420.100">
    <property type="match status" value="1"/>
</dbReference>
<dbReference type="HAMAP" id="MF_01337_B">
    <property type="entry name" value="Ribosomal_uL18_B"/>
    <property type="match status" value="1"/>
</dbReference>
<dbReference type="InterPro" id="IPR004389">
    <property type="entry name" value="Ribosomal_uL18_bac-type"/>
</dbReference>
<dbReference type="InterPro" id="IPR005484">
    <property type="entry name" value="Ribosomal_uL18_bac/euk"/>
</dbReference>
<dbReference type="NCBIfam" id="TIGR00060">
    <property type="entry name" value="L18_bact"/>
    <property type="match status" value="1"/>
</dbReference>
<dbReference type="PANTHER" id="PTHR12899">
    <property type="entry name" value="39S RIBOSOMAL PROTEIN L18, MITOCHONDRIAL"/>
    <property type="match status" value="1"/>
</dbReference>
<dbReference type="PANTHER" id="PTHR12899:SF3">
    <property type="entry name" value="LARGE RIBOSOMAL SUBUNIT PROTEIN UL18M"/>
    <property type="match status" value="1"/>
</dbReference>
<dbReference type="Pfam" id="PF00861">
    <property type="entry name" value="Ribosomal_L18p"/>
    <property type="match status" value="1"/>
</dbReference>
<dbReference type="SUPFAM" id="SSF53137">
    <property type="entry name" value="Translational machinery components"/>
    <property type="match status" value="1"/>
</dbReference>
<organism>
    <name type="scientific">Xanthomonas oryzae pv. oryzae (strain PXO99A)</name>
    <dbReference type="NCBI Taxonomy" id="360094"/>
    <lineage>
        <taxon>Bacteria</taxon>
        <taxon>Pseudomonadati</taxon>
        <taxon>Pseudomonadota</taxon>
        <taxon>Gammaproteobacteria</taxon>
        <taxon>Lysobacterales</taxon>
        <taxon>Lysobacteraceae</taxon>
        <taxon>Xanthomonas</taxon>
    </lineage>
</organism>